<reference key="1">
    <citation type="submission" date="1997-02" db="EMBL/GenBank/DDBJ databases">
        <authorList>
            <person name="Goto C."/>
            <person name="Maeda S."/>
        </authorList>
    </citation>
    <scope>NUCLEOTIDE SEQUENCE [GENOMIC DNA]</scope>
    <source>
        <strain>Alpha-4</strain>
    </source>
</reference>
<sequence>MFWLLTSLFIILLYLIYSPLQRTYQQIKLETEATNKILDDPEYLERMIRRRYAPLHALPRVEFNASFDTLEGPGGGHCFSQPVRVSRQDLVTYDCASLCDDVRAAYFYVGPYDRLVVDGNELQEGGYCTTNSVPRNCNRETSILLHSINHWTCIAEDPRYYAGRTG</sequence>
<protein>
    <recommendedName>
        <fullName>Uncharacterized ORF22 homolog</fullName>
    </recommendedName>
</protein>
<proteinExistence type="predicted"/>
<name>Y022_GVXN</name>
<feature type="chain" id="PRO_0000132959" description="Uncharacterized ORF22 homolog">
    <location>
        <begin position="1"/>
        <end position="166" status="greater than"/>
    </location>
</feature>
<feature type="non-terminal residue">
    <location>
        <position position="166"/>
    </location>
</feature>
<dbReference type="EMBL" id="U70891">
    <property type="protein sequence ID" value="AAB46481.1"/>
    <property type="molecule type" value="Genomic_DNA"/>
</dbReference>
<dbReference type="SMR" id="P89263"/>
<dbReference type="InterPro" id="IPR006725">
    <property type="entry name" value="PIF2"/>
</dbReference>
<dbReference type="Pfam" id="PF04631">
    <property type="entry name" value="PIF2"/>
    <property type="match status" value="1"/>
</dbReference>
<organismHost>
    <name type="scientific">Xestia</name>
    <dbReference type="NCBI Taxonomy" id="320016"/>
</organismHost>
<accession>P89263</accession>
<organism>
    <name type="scientific">Xestia c-nigrum granulosis virus</name>
    <name type="common">XnGV</name>
    <name type="synonym">Xestia c-nigrum granulovirus</name>
    <dbReference type="NCBI Taxonomy" id="51677"/>
    <lineage>
        <taxon>Viruses</taxon>
        <taxon>Viruses incertae sedis</taxon>
        <taxon>Naldaviricetes</taxon>
        <taxon>Lefavirales</taxon>
        <taxon>Baculoviridae</taxon>
        <taxon>Betabaculovirus</taxon>
        <taxon>Betabaculovirus xecnigri</taxon>
    </lineage>
</organism>